<feature type="chain" id="PRO_0000461497" description="Cytochrome P450 monooxygenase fsoD">
    <location>
        <begin position="1"/>
        <end position="547"/>
    </location>
</feature>
<feature type="transmembrane region" description="Helical" evidence="2">
    <location>
        <begin position="3"/>
        <end position="23"/>
    </location>
</feature>
<feature type="binding site" description="axial binding residue" evidence="1">
    <location>
        <position position="490"/>
    </location>
    <ligand>
        <name>heme</name>
        <dbReference type="ChEBI" id="CHEBI:30413"/>
    </ligand>
    <ligandPart>
        <name>Fe</name>
        <dbReference type="ChEBI" id="CHEBI:18248"/>
    </ligandPart>
</feature>
<accession>P9WEH0</accession>
<evidence type="ECO:0000250" key="1">
    <source>
        <dbReference type="UniProtKB" id="P04798"/>
    </source>
</evidence>
<evidence type="ECO:0000255" key="2"/>
<evidence type="ECO:0000269" key="3">
    <source>
    </source>
</evidence>
<evidence type="ECO:0000303" key="4">
    <source>
    </source>
</evidence>
<evidence type="ECO:0000305" key="5"/>
<organism>
    <name type="scientific">Humicola fuscoatra</name>
    <dbReference type="NCBI Taxonomy" id="112175"/>
    <lineage>
        <taxon>Eukaryota</taxon>
        <taxon>Fungi</taxon>
        <taxon>Dikarya</taxon>
        <taxon>Ascomycota</taxon>
        <taxon>Pezizomycotina</taxon>
        <taxon>Sordariomycetes</taxon>
        <taxon>Sordariomycetidae</taxon>
        <taxon>Sordariales</taxon>
        <taxon>Chaetomiaceae</taxon>
        <taxon>Humicola</taxon>
    </lineage>
</organism>
<dbReference type="EC" id="1.-.-.-" evidence="3"/>
<dbReference type="EMBL" id="OR962264">
    <property type="protein sequence ID" value="XAF84279.1"/>
    <property type="molecule type" value="Genomic_DNA"/>
</dbReference>
<dbReference type="UniPathway" id="UPA00213"/>
<dbReference type="GO" id="GO:0016020">
    <property type="term" value="C:membrane"/>
    <property type="evidence" value="ECO:0007669"/>
    <property type="project" value="UniProtKB-SubCell"/>
</dbReference>
<dbReference type="GO" id="GO:0020037">
    <property type="term" value="F:heme binding"/>
    <property type="evidence" value="ECO:0007669"/>
    <property type="project" value="InterPro"/>
</dbReference>
<dbReference type="GO" id="GO:0005506">
    <property type="term" value="F:iron ion binding"/>
    <property type="evidence" value="ECO:0007669"/>
    <property type="project" value="InterPro"/>
</dbReference>
<dbReference type="GO" id="GO:0004497">
    <property type="term" value="F:monooxygenase activity"/>
    <property type="evidence" value="ECO:0007669"/>
    <property type="project" value="UniProtKB-KW"/>
</dbReference>
<dbReference type="GO" id="GO:0016705">
    <property type="term" value="F:oxidoreductase activity, acting on paired donors, with incorporation or reduction of molecular oxygen"/>
    <property type="evidence" value="ECO:0007669"/>
    <property type="project" value="InterPro"/>
</dbReference>
<dbReference type="GO" id="GO:0019748">
    <property type="term" value="P:secondary metabolic process"/>
    <property type="evidence" value="ECO:0007669"/>
    <property type="project" value="UniProtKB-ARBA"/>
</dbReference>
<dbReference type="CDD" id="cd11041">
    <property type="entry name" value="CYP503A1-like"/>
    <property type="match status" value="1"/>
</dbReference>
<dbReference type="Gene3D" id="1.10.630.10">
    <property type="entry name" value="Cytochrome P450"/>
    <property type="match status" value="1"/>
</dbReference>
<dbReference type="InterPro" id="IPR001128">
    <property type="entry name" value="Cyt_P450"/>
</dbReference>
<dbReference type="InterPro" id="IPR017972">
    <property type="entry name" value="Cyt_P450_CS"/>
</dbReference>
<dbReference type="InterPro" id="IPR036396">
    <property type="entry name" value="Cyt_P450_sf"/>
</dbReference>
<dbReference type="PANTHER" id="PTHR46206">
    <property type="entry name" value="CYTOCHROME P450"/>
    <property type="match status" value="1"/>
</dbReference>
<dbReference type="PANTHER" id="PTHR46206:SF1">
    <property type="entry name" value="P450, PUTATIVE (EUROFUNG)-RELATED"/>
    <property type="match status" value="1"/>
</dbReference>
<dbReference type="Pfam" id="PF00067">
    <property type="entry name" value="p450"/>
    <property type="match status" value="1"/>
</dbReference>
<dbReference type="SUPFAM" id="SSF48264">
    <property type="entry name" value="Cytochrome P450"/>
    <property type="match status" value="1"/>
</dbReference>
<dbReference type="PROSITE" id="PS00086">
    <property type="entry name" value="CYTOCHROME_P450"/>
    <property type="match status" value="1"/>
</dbReference>
<reference key="1">
    <citation type="journal article" date="2024" name="J. Am. Chem. Soc.">
        <title>Biosynthesis of Enfumafungin-type Antibiotic Reveals an Unusual Enzymatic Fusion Pattern and Unprecedented C-C Bond Cleavage.</title>
        <authorList>
            <person name="Cao Z.Q."/>
            <person name="Wang G.Q."/>
            <person name="Luo R."/>
            <person name="Gao Y.H."/>
            <person name="Lv J.M."/>
            <person name="Qin S.Y."/>
            <person name="Chen G.D."/>
            <person name="Awakawa T."/>
            <person name="Bao X.F."/>
            <person name="Mei Q.H."/>
            <person name="Yao X.S."/>
            <person name="Hu D."/>
            <person name="Abe I."/>
            <person name="Gao H."/>
        </authorList>
    </citation>
    <scope>NUCLEOTIDE SEQUENCE [GENOMIC DNA]</scope>
    <scope>FUNCTION</scope>
    <scope>CATALYTIC ACTIVITY</scope>
    <scope>PATHWAY</scope>
    <scope>BIOTECHNOLOGY</scope>
</reference>
<sequence length="547" mass="61616">MYDITLAAVSIGLFFYVGARAVLKCLFPRQTSFPKHVPVVGVRDEMLSITRASLRQLTNGITTLLDGYSKHGQRNRPFVLYDPSAQPELLLPVQHIRWFSEQPDSKLSSHGVRQERHAVRYLHMGDQVELESTTRFIRYASNDRLNRHLENLQGLLHDEVRRSVDCVFGSQRQAQDDHWKEINLYGAMQDLVFPIMCRVFLGKELGESDEERGRVLTVFRRYLMAMGISTIFIGELPRLLKGVVARVVRIPLAYYRSQTLRMLVPLVRSQLSRTKHDEDDDDERGSDFIKHCANLSTKSTLSGTSSEAGPDLIAEWIMMLAGSLGFAGSSSTIIQATNLILDLVNTPPELLALQQLRHEAERTLQDDSNWTQAASFRQQKLADSAIRESLRLHPILIKGLTKEVVTPNGLELPDDENTTIPMGSWVGVPVLGIHQDERFYPQASEYRPFRFVEQAEAARTQAGGGSYEDAPEAAKPTTTYLGFGYGRHACPGRWFAVLMLKMILSYVLLHYDVESTGPAPKTRVLGDAALPPFRATIRVRKRKLGSE</sequence>
<comment type="function">
    <text evidence="3">Cytochrome P450 monooxygenase; part of the gene cluster that mediates the biosynthesis of the enfumafungin-type antibiotic, fuscoatroside (PubMed:38654452). Within the pathway, fsoD catalyzes the hydroxylation at position C2 of isomotiol to produce 2-alpha-hydroxy-isomotiol. FsoD may also hydroxylate the intermediates 3-O-(beta-D-glucopyranosyl)-isomotiol and 2-deacetoxy-fuscoatroside at the same position C2 (PubMed:38654452). The fuscoatroside biosynthesis is initiated by the cyclization of 2,3(S)-oxidosqualene through FsoA's terpene cyclase (TC) domain, leading to the formation of the fernane skeleton isomotiol, harboring a fernane triterpene skeleton with a C8-C9 double bond. Subsequently, C2-alpha-hydroxylation mediated by fsoD results in the production of 2-alpha-hydroxy-isomotiol, which is further acetylated by fsoF. The glycosyltransferase (GT) domain of FsoA may convert isomotiol, 2-alpha-hydroxy-isomotiol, and the acetylated derivative of 2-alpha-hydroxy-isomotiol into their corresponding glycosides 3-O-(beta-D-glucopyranosyl)-isomotiol, 3-O-(beta-D-glucopyranosyl)-2-alpha-hydroxy-isomotiol, and 3-O-(beta-D-glucopyranosyl)-2-alpha-acetoxy-isomotiol, which then undergo oxidative cleavage under the action of fsoE to form s 2-deacetoxy-fuscoatroside, 2-deacetyl-fuscoatroside, and fuscoatroside, respectively. Although hydroxylation followed by acetylation of 3-O-(beta-D-glucopyranosyl)-isomotiol and 2-deacetoxy-fuscoatroside by fsoD and fsoF could not be ruled out, this process is likely to occur with difficulty due to bulky steric hindrance caused by the presence of a glycan at C3 in these compounds. Interestingly, fsoE can also utilize the aglycones isomotiol and 2-alpha-hydroxy-isomotiol as substrates to generate 19-beta-hydroxy-isomotiol and 2-alpha,19-beta-dihydroxy-isomotiol, respectively. These reactions occur with lower efficiency. Finally, fsoE can further convert 2-alpha,19-beta-dihydroxy-isomotiol into 2-alpha-hydroxy-ismotiol-19-one and 2-alpha-hydroxy-ismotiol-19-one into 2-deacetyl-3-deglucopyranosyl-fuscoatroside (PubMed:38654452).</text>
</comment>
<comment type="catalytic activity">
    <reaction evidence="3">
        <text>isomotiol + reduced [NADPH--hemoprotein reductase] + O2 = 2alpha-hydroxyisomotiol + oxidized [NADPH--hemoprotein reductase] + H2O + H(+)</text>
        <dbReference type="Rhea" id="RHEA:82727"/>
        <dbReference type="Rhea" id="RHEA-COMP:11964"/>
        <dbReference type="Rhea" id="RHEA-COMP:11965"/>
        <dbReference type="ChEBI" id="CHEBI:15377"/>
        <dbReference type="ChEBI" id="CHEBI:15378"/>
        <dbReference type="ChEBI" id="CHEBI:15379"/>
        <dbReference type="ChEBI" id="CHEBI:57618"/>
        <dbReference type="ChEBI" id="CHEBI:58210"/>
        <dbReference type="ChEBI" id="CHEBI:232471"/>
        <dbReference type="ChEBI" id="CHEBI:232472"/>
    </reaction>
    <physiologicalReaction direction="left-to-right" evidence="3">
        <dbReference type="Rhea" id="RHEA:82728"/>
    </physiologicalReaction>
</comment>
<comment type="cofactor">
    <cofactor evidence="1">
        <name>heme</name>
        <dbReference type="ChEBI" id="CHEBI:30413"/>
    </cofactor>
</comment>
<comment type="pathway">
    <text evidence="3">Secondary metabolite biosynthesis; terpenoid biosynthesis.</text>
</comment>
<comment type="subcellular location">
    <subcellularLocation>
        <location evidence="2">Membrane</location>
        <topology evidence="2">Single-pass membrane protein</topology>
    </subcellularLocation>
</comment>
<comment type="biotechnology">
    <text evidence="3">Fuscoatroside and some of its derivatives show interesting antifungal activity against Candida albicans and Aspergillus niger.</text>
</comment>
<comment type="similarity">
    <text evidence="5">Belongs to the cytochrome P450 family.</text>
</comment>
<keyword id="KW-0349">Heme</keyword>
<keyword id="KW-0408">Iron</keyword>
<keyword id="KW-0472">Membrane</keyword>
<keyword id="KW-0479">Metal-binding</keyword>
<keyword id="KW-0503">Monooxygenase</keyword>
<keyword id="KW-0560">Oxidoreductase</keyword>
<keyword id="KW-0812">Transmembrane</keyword>
<keyword id="KW-1133">Transmembrane helix</keyword>
<protein>
    <recommendedName>
        <fullName evidence="4">Cytochrome P450 monooxygenase fsoD</fullName>
        <ecNumber evidence="3">1.-.-.-</ecNumber>
    </recommendedName>
    <alternativeName>
        <fullName evidence="4">Fuscoatroside biosynthesis cluster protein D</fullName>
    </alternativeName>
</protein>
<name>FSOD_HUMFU</name>
<proteinExistence type="evidence at protein level"/>
<gene>
    <name evidence="4" type="primary">fsoD</name>
</gene>